<feature type="chain" id="PRO_1000010122" description="Ribosomal RNA small subunit methyltransferase G">
    <location>
        <begin position="1"/>
        <end position="206"/>
    </location>
</feature>
<feature type="binding site" evidence="1">
    <location>
        <position position="71"/>
    </location>
    <ligand>
        <name>S-adenosyl-L-methionine</name>
        <dbReference type="ChEBI" id="CHEBI:59789"/>
    </ligand>
</feature>
<feature type="binding site" evidence="1">
    <location>
        <position position="76"/>
    </location>
    <ligand>
        <name>S-adenosyl-L-methionine</name>
        <dbReference type="ChEBI" id="CHEBI:59789"/>
    </ligand>
</feature>
<feature type="binding site" evidence="1">
    <location>
        <begin position="122"/>
        <end position="123"/>
    </location>
    <ligand>
        <name>S-adenosyl-L-methionine</name>
        <dbReference type="ChEBI" id="CHEBI:59789"/>
    </ligand>
</feature>
<feature type="binding site" evidence="1">
    <location>
        <position position="135"/>
    </location>
    <ligand>
        <name>S-adenosyl-L-methionine</name>
        <dbReference type="ChEBI" id="CHEBI:59789"/>
    </ligand>
</feature>
<gene>
    <name evidence="1" type="primary">rsmG</name>
    <name type="ordered locus">BF2081</name>
</gene>
<comment type="function">
    <text evidence="1">Specifically methylates the N7 position of a guanine in 16S rRNA.</text>
</comment>
<comment type="subcellular location">
    <subcellularLocation>
        <location evidence="1">Cytoplasm</location>
    </subcellularLocation>
</comment>
<comment type="similarity">
    <text evidence="1">Belongs to the methyltransferase superfamily. RNA methyltransferase RsmG family.</text>
</comment>
<accession>Q5LDN0</accession>
<protein>
    <recommendedName>
        <fullName evidence="1">Ribosomal RNA small subunit methyltransferase G</fullName>
        <ecNumber evidence="1">2.1.1.-</ecNumber>
    </recommendedName>
    <alternativeName>
        <fullName evidence="1">16S rRNA 7-methylguanosine methyltransferase</fullName>
        <shortName evidence="1">16S rRNA m7G methyltransferase</shortName>
    </alternativeName>
</protein>
<reference key="1">
    <citation type="journal article" date="2005" name="Science">
        <title>Extensive DNA inversions in the B. fragilis genome control variable gene expression.</title>
        <authorList>
            <person name="Cerdeno-Tarraga A.-M."/>
            <person name="Patrick S."/>
            <person name="Crossman L.C."/>
            <person name="Blakely G."/>
            <person name="Abratt V."/>
            <person name="Lennard N."/>
            <person name="Poxton I."/>
            <person name="Duerden B."/>
            <person name="Harris B."/>
            <person name="Quail M.A."/>
            <person name="Barron A."/>
            <person name="Clark L."/>
            <person name="Corton C."/>
            <person name="Doggett J."/>
            <person name="Holden M.T.G."/>
            <person name="Larke N."/>
            <person name="Line A."/>
            <person name="Lord A."/>
            <person name="Norbertczak H."/>
            <person name="Ormond D."/>
            <person name="Price C."/>
            <person name="Rabbinowitsch E."/>
            <person name="Woodward J."/>
            <person name="Barrell B.G."/>
            <person name="Parkhill J."/>
        </authorList>
    </citation>
    <scope>NUCLEOTIDE SEQUENCE [LARGE SCALE GENOMIC DNA]</scope>
    <source>
        <strain>ATCC 25285 / DSM 2151 / CCUG 4856 / JCM 11019 / LMG 10263 / NCTC 9343 / Onslow / VPI 2553 / EN-2</strain>
    </source>
</reference>
<evidence type="ECO:0000255" key="1">
    <source>
        <dbReference type="HAMAP-Rule" id="MF_00074"/>
    </source>
</evidence>
<sequence>MKLLLKYFPDLTEEQRKQFAALYELYIDWNSKINVISRKDIENLYEHHVLHSLGIARIIRFRAGSSVMDLGTGGGFPGIPLAILFPDTKFHLVDSIGKKVRVATEVANAIGLKNVTFRHARAEEEKQTFDFVVSRAVMPLADLIKIIRKNISPKQQNALPNGLICLKGGELEHEAMPFKHKTSMHNLNEDFDEEFFQTKKVVYVTI</sequence>
<proteinExistence type="inferred from homology"/>
<keyword id="KW-0963">Cytoplasm</keyword>
<keyword id="KW-0489">Methyltransferase</keyword>
<keyword id="KW-0698">rRNA processing</keyword>
<keyword id="KW-0949">S-adenosyl-L-methionine</keyword>
<keyword id="KW-0808">Transferase</keyword>
<dbReference type="EC" id="2.1.1.-" evidence="1"/>
<dbReference type="EMBL" id="CR626927">
    <property type="protein sequence ID" value="CAH07778.1"/>
    <property type="molecule type" value="Genomic_DNA"/>
</dbReference>
<dbReference type="RefSeq" id="WP_010992836.1">
    <property type="nucleotide sequence ID" value="NZ_UFTH01000001.1"/>
</dbReference>
<dbReference type="SMR" id="Q5LDN0"/>
<dbReference type="PaxDb" id="272559-BF9343_1997"/>
<dbReference type="GeneID" id="60365708"/>
<dbReference type="KEGG" id="bfs:BF9343_1997"/>
<dbReference type="eggNOG" id="COG0357">
    <property type="taxonomic scope" value="Bacteria"/>
</dbReference>
<dbReference type="HOGENOM" id="CLU_065341_2_2_10"/>
<dbReference type="Proteomes" id="UP000006731">
    <property type="component" value="Chromosome"/>
</dbReference>
<dbReference type="GO" id="GO:0005829">
    <property type="term" value="C:cytosol"/>
    <property type="evidence" value="ECO:0007669"/>
    <property type="project" value="TreeGrafter"/>
</dbReference>
<dbReference type="GO" id="GO:0070043">
    <property type="term" value="F:rRNA (guanine-N7-)-methyltransferase activity"/>
    <property type="evidence" value="ECO:0007669"/>
    <property type="project" value="UniProtKB-UniRule"/>
</dbReference>
<dbReference type="CDD" id="cd02440">
    <property type="entry name" value="AdoMet_MTases"/>
    <property type="match status" value="1"/>
</dbReference>
<dbReference type="FunFam" id="3.40.50.150:FF:000429">
    <property type="entry name" value="Ribosomal RNA small subunit methyltransferase G"/>
    <property type="match status" value="1"/>
</dbReference>
<dbReference type="Gene3D" id="3.40.50.150">
    <property type="entry name" value="Vaccinia Virus protein VP39"/>
    <property type="match status" value="1"/>
</dbReference>
<dbReference type="HAMAP" id="MF_00074">
    <property type="entry name" value="16SrRNA_methyltr_G"/>
    <property type="match status" value="1"/>
</dbReference>
<dbReference type="InterPro" id="IPR003682">
    <property type="entry name" value="rRNA_ssu_MeTfrase_G"/>
</dbReference>
<dbReference type="InterPro" id="IPR029063">
    <property type="entry name" value="SAM-dependent_MTases_sf"/>
</dbReference>
<dbReference type="NCBIfam" id="TIGR00138">
    <property type="entry name" value="rsmG_gidB"/>
    <property type="match status" value="1"/>
</dbReference>
<dbReference type="PANTHER" id="PTHR31760">
    <property type="entry name" value="S-ADENOSYL-L-METHIONINE-DEPENDENT METHYLTRANSFERASES SUPERFAMILY PROTEIN"/>
    <property type="match status" value="1"/>
</dbReference>
<dbReference type="PANTHER" id="PTHR31760:SF0">
    <property type="entry name" value="S-ADENOSYL-L-METHIONINE-DEPENDENT METHYLTRANSFERASES SUPERFAMILY PROTEIN"/>
    <property type="match status" value="1"/>
</dbReference>
<dbReference type="Pfam" id="PF02527">
    <property type="entry name" value="GidB"/>
    <property type="match status" value="1"/>
</dbReference>
<dbReference type="PIRSF" id="PIRSF003078">
    <property type="entry name" value="GidB"/>
    <property type="match status" value="1"/>
</dbReference>
<dbReference type="SUPFAM" id="SSF53335">
    <property type="entry name" value="S-adenosyl-L-methionine-dependent methyltransferases"/>
    <property type="match status" value="1"/>
</dbReference>
<organism>
    <name type="scientific">Bacteroides fragilis (strain ATCC 25285 / DSM 2151 / CCUG 4856 / JCM 11019 / LMG 10263 / NCTC 9343 / Onslow / VPI 2553 / EN-2)</name>
    <dbReference type="NCBI Taxonomy" id="272559"/>
    <lineage>
        <taxon>Bacteria</taxon>
        <taxon>Pseudomonadati</taxon>
        <taxon>Bacteroidota</taxon>
        <taxon>Bacteroidia</taxon>
        <taxon>Bacteroidales</taxon>
        <taxon>Bacteroidaceae</taxon>
        <taxon>Bacteroides</taxon>
    </lineage>
</organism>
<name>RSMG_BACFN</name>